<keyword id="KW-0963">Cytoplasm</keyword>
<keyword id="KW-0227">DNA damage</keyword>
<keyword id="KW-0233">DNA recombination</keyword>
<keyword id="KW-0234">DNA repair</keyword>
<keyword id="KW-0238">DNA-binding</keyword>
<keyword id="KW-1185">Reference proteome</keyword>
<protein>
    <recommendedName>
        <fullName evidence="1">Holliday junction branch migration complex subunit RuvA</fullName>
    </recommendedName>
</protein>
<feature type="chain" id="PRO_1000090316" description="Holliday junction branch migration complex subunit RuvA">
    <location>
        <begin position="1"/>
        <end position="204"/>
    </location>
</feature>
<feature type="region of interest" description="Domain I" evidence="1">
    <location>
        <begin position="1"/>
        <end position="64"/>
    </location>
</feature>
<feature type="region of interest" description="Domain II" evidence="1">
    <location>
        <begin position="65"/>
        <end position="143"/>
    </location>
</feature>
<feature type="region of interest" description="Flexible linker" evidence="1">
    <location>
        <begin position="144"/>
        <end position="155"/>
    </location>
</feature>
<feature type="region of interest" description="Domain III" evidence="1">
    <location>
        <begin position="156"/>
        <end position="204"/>
    </location>
</feature>
<name>RUVA_ERWT9</name>
<reference key="1">
    <citation type="journal article" date="2008" name="Environ. Microbiol.">
        <title>The genome of Erwinia tasmaniensis strain Et1/99, a non-pathogenic bacterium in the genus Erwinia.</title>
        <authorList>
            <person name="Kube M."/>
            <person name="Migdoll A.M."/>
            <person name="Mueller I."/>
            <person name="Kuhl H."/>
            <person name="Beck A."/>
            <person name="Reinhardt R."/>
            <person name="Geider K."/>
        </authorList>
    </citation>
    <scope>NUCLEOTIDE SEQUENCE [LARGE SCALE GENOMIC DNA]</scope>
    <source>
        <strain>DSM 17950 / CFBP 7177 / CIP 109463 / NCPPB 4357 / Et1/99</strain>
    </source>
</reference>
<sequence>MIGRLRGIILEKQPPVVLIEASGVGYEVQMPMTCFYELPDIQHEAIIFTHFVVREDAQLLFGFNSKPERALFRELIKVNGVGPKLALAILSGMSAQQFVTAVEREEIAALVKLPGVGKKTAERLVVEMKDRFKGMHGDLFASDAPFALTSEMPKETANDAEGEAVAALTALGYKPQEASRMIVKVGKPDADCETLIREALRAAI</sequence>
<organism>
    <name type="scientific">Erwinia tasmaniensis (strain DSM 17950 / CFBP 7177 / CIP 109463 / NCPPB 4357 / Et1/99)</name>
    <dbReference type="NCBI Taxonomy" id="465817"/>
    <lineage>
        <taxon>Bacteria</taxon>
        <taxon>Pseudomonadati</taxon>
        <taxon>Pseudomonadota</taxon>
        <taxon>Gammaproteobacteria</taxon>
        <taxon>Enterobacterales</taxon>
        <taxon>Erwiniaceae</taxon>
        <taxon>Erwinia</taxon>
    </lineage>
</organism>
<evidence type="ECO:0000255" key="1">
    <source>
        <dbReference type="HAMAP-Rule" id="MF_00031"/>
    </source>
</evidence>
<dbReference type="EMBL" id="CU468135">
    <property type="protein sequence ID" value="CAO96535.1"/>
    <property type="molecule type" value="Genomic_DNA"/>
</dbReference>
<dbReference type="RefSeq" id="WP_012441229.1">
    <property type="nucleotide sequence ID" value="NC_010694.1"/>
</dbReference>
<dbReference type="SMR" id="B2VJ94"/>
<dbReference type="STRING" id="465817.ETA_14890"/>
<dbReference type="KEGG" id="eta:ETA_14890"/>
<dbReference type="eggNOG" id="COG0632">
    <property type="taxonomic scope" value="Bacteria"/>
</dbReference>
<dbReference type="HOGENOM" id="CLU_087936_0_0_6"/>
<dbReference type="OrthoDB" id="5293449at2"/>
<dbReference type="Proteomes" id="UP000001726">
    <property type="component" value="Chromosome"/>
</dbReference>
<dbReference type="GO" id="GO:0005737">
    <property type="term" value="C:cytoplasm"/>
    <property type="evidence" value="ECO:0007669"/>
    <property type="project" value="UniProtKB-SubCell"/>
</dbReference>
<dbReference type="GO" id="GO:0009379">
    <property type="term" value="C:Holliday junction helicase complex"/>
    <property type="evidence" value="ECO:0007669"/>
    <property type="project" value="InterPro"/>
</dbReference>
<dbReference type="GO" id="GO:0048476">
    <property type="term" value="C:Holliday junction resolvase complex"/>
    <property type="evidence" value="ECO:0007669"/>
    <property type="project" value="UniProtKB-UniRule"/>
</dbReference>
<dbReference type="GO" id="GO:0005524">
    <property type="term" value="F:ATP binding"/>
    <property type="evidence" value="ECO:0007669"/>
    <property type="project" value="InterPro"/>
</dbReference>
<dbReference type="GO" id="GO:0000400">
    <property type="term" value="F:four-way junction DNA binding"/>
    <property type="evidence" value="ECO:0007669"/>
    <property type="project" value="UniProtKB-UniRule"/>
</dbReference>
<dbReference type="GO" id="GO:0009378">
    <property type="term" value="F:four-way junction helicase activity"/>
    <property type="evidence" value="ECO:0007669"/>
    <property type="project" value="InterPro"/>
</dbReference>
<dbReference type="GO" id="GO:0006310">
    <property type="term" value="P:DNA recombination"/>
    <property type="evidence" value="ECO:0007669"/>
    <property type="project" value="UniProtKB-UniRule"/>
</dbReference>
<dbReference type="GO" id="GO:0006281">
    <property type="term" value="P:DNA repair"/>
    <property type="evidence" value="ECO:0007669"/>
    <property type="project" value="UniProtKB-UniRule"/>
</dbReference>
<dbReference type="CDD" id="cd14332">
    <property type="entry name" value="UBA_RuvA_C"/>
    <property type="match status" value="1"/>
</dbReference>
<dbReference type="FunFam" id="1.10.150.20:FF:000012">
    <property type="entry name" value="Holliday junction ATP-dependent DNA helicase RuvA"/>
    <property type="match status" value="1"/>
</dbReference>
<dbReference type="FunFam" id="2.40.50.140:FF:000083">
    <property type="entry name" value="Holliday junction ATP-dependent DNA helicase RuvA"/>
    <property type="match status" value="1"/>
</dbReference>
<dbReference type="Gene3D" id="1.10.150.20">
    <property type="entry name" value="5' to 3' exonuclease, C-terminal subdomain"/>
    <property type="match status" value="1"/>
</dbReference>
<dbReference type="Gene3D" id="1.10.8.10">
    <property type="entry name" value="DNA helicase RuvA subunit, C-terminal domain"/>
    <property type="match status" value="1"/>
</dbReference>
<dbReference type="Gene3D" id="2.40.50.140">
    <property type="entry name" value="Nucleic acid-binding proteins"/>
    <property type="match status" value="1"/>
</dbReference>
<dbReference type="HAMAP" id="MF_00031">
    <property type="entry name" value="DNA_HJ_migration_RuvA"/>
    <property type="match status" value="1"/>
</dbReference>
<dbReference type="InterPro" id="IPR013849">
    <property type="entry name" value="DNA_helicase_Holl-junc_RuvA_I"/>
</dbReference>
<dbReference type="InterPro" id="IPR003583">
    <property type="entry name" value="Hlx-hairpin-Hlx_DNA-bd_motif"/>
</dbReference>
<dbReference type="InterPro" id="IPR012340">
    <property type="entry name" value="NA-bd_OB-fold"/>
</dbReference>
<dbReference type="InterPro" id="IPR000085">
    <property type="entry name" value="RuvA"/>
</dbReference>
<dbReference type="InterPro" id="IPR010994">
    <property type="entry name" value="RuvA_2-like"/>
</dbReference>
<dbReference type="InterPro" id="IPR011114">
    <property type="entry name" value="RuvA_C"/>
</dbReference>
<dbReference type="InterPro" id="IPR036267">
    <property type="entry name" value="RuvA_C_sf"/>
</dbReference>
<dbReference type="NCBIfam" id="TIGR00084">
    <property type="entry name" value="ruvA"/>
    <property type="match status" value="1"/>
</dbReference>
<dbReference type="Pfam" id="PF14520">
    <property type="entry name" value="HHH_5"/>
    <property type="match status" value="1"/>
</dbReference>
<dbReference type="Pfam" id="PF07499">
    <property type="entry name" value="RuvA_C"/>
    <property type="match status" value="1"/>
</dbReference>
<dbReference type="Pfam" id="PF01330">
    <property type="entry name" value="RuvA_N"/>
    <property type="match status" value="1"/>
</dbReference>
<dbReference type="SMART" id="SM00278">
    <property type="entry name" value="HhH1"/>
    <property type="match status" value="2"/>
</dbReference>
<dbReference type="SUPFAM" id="SSF46929">
    <property type="entry name" value="DNA helicase RuvA subunit, C-terminal domain"/>
    <property type="match status" value="1"/>
</dbReference>
<dbReference type="SUPFAM" id="SSF50249">
    <property type="entry name" value="Nucleic acid-binding proteins"/>
    <property type="match status" value="1"/>
</dbReference>
<dbReference type="SUPFAM" id="SSF47781">
    <property type="entry name" value="RuvA domain 2-like"/>
    <property type="match status" value="1"/>
</dbReference>
<gene>
    <name evidence="1" type="primary">ruvA</name>
    <name type="ordered locus">ETA_14890</name>
</gene>
<proteinExistence type="inferred from homology"/>
<comment type="function">
    <text evidence="1">The RuvA-RuvB-RuvC complex processes Holliday junction (HJ) DNA during genetic recombination and DNA repair, while the RuvA-RuvB complex plays an important role in the rescue of blocked DNA replication forks via replication fork reversal (RFR). RuvA specifically binds to HJ cruciform DNA, conferring on it an open structure. The RuvB hexamer acts as an ATP-dependent pump, pulling dsDNA into and through the RuvAB complex. HJ branch migration allows RuvC to scan DNA until it finds its consensus sequence, where it cleaves and resolves the cruciform DNA.</text>
</comment>
<comment type="subunit">
    <text evidence="1">Homotetramer. Forms an RuvA(8)-RuvB(12)-Holliday junction (HJ) complex. HJ DNA is sandwiched between 2 RuvA tetramers; dsDNA enters through RuvA and exits via RuvB. An RuvB hexamer assembles on each DNA strand where it exits the tetramer. Each RuvB hexamer is contacted by two RuvA subunits (via domain III) on 2 adjacent RuvB subunits; this complex drives branch migration. In the full resolvosome a probable DNA-RuvA(4)-RuvB(12)-RuvC(2) complex forms which resolves the HJ.</text>
</comment>
<comment type="subcellular location">
    <subcellularLocation>
        <location evidence="1">Cytoplasm</location>
    </subcellularLocation>
</comment>
<comment type="domain">
    <text evidence="1">Has three domains with a flexible linker between the domains II and III and assumes an 'L' shape. Domain III is highly mobile and contacts RuvB.</text>
</comment>
<comment type="similarity">
    <text evidence="1">Belongs to the RuvA family.</text>
</comment>
<accession>B2VJ94</accession>